<name>RS10_MYCGE</name>
<proteinExistence type="inferred from homology"/>
<comment type="function">
    <text evidence="1">Involved in the binding of tRNA to the ribosomes.</text>
</comment>
<comment type="subunit">
    <text evidence="1">Part of the 30S ribosomal subunit.</text>
</comment>
<comment type="similarity">
    <text evidence="1">Belongs to the universal ribosomal protein uS10 family.</text>
</comment>
<evidence type="ECO:0000255" key="1">
    <source>
        <dbReference type="HAMAP-Rule" id="MF_00508"/>
    </source>
</evidence>
<evidence type="ECO:0000305" key="2"/>
<protein>
    <recommendedName>
        <fullName evidence="1">Small ribosomal subunit protein uS10</fullName>
    </recommendedName>
    <alternativeName>
        <fullName evidence="2">30S ribosomal protein S10</fullName>
    </alternativeName>
</protein>
<gene>
    <name evidence="1" type="primary">rpsJ</name>
    <name evidence="1" type="synonym">rps10</name>
    <name type="ordered locus">MG150</name>
</gene>
<sequence length="106" mass="11961">MNSAVKYPELKIKLESYDSTLLDLTIKKIVEVVKGVNIKIKGPLPLPTKKEVITIIRSPHVDKASREQFEKNTHKRLMILVDVNQGGIDSLKKIKIPVGVTLRFSK</sequence>
<reference key="1">
    <citation type="journal article" date="1995" name="Science">
        <title>The minimal gene complement of Mycoplasma genitalium.</title>
        <authorList>
            <person name="Fraser C.M."/>
            <person name="Gocayne J.D."/>
            <person name="White O."/>
            <person name="Adams M.D."/>
            <person name="Clayton R.A."/>
            <person name="Fleischmann R.D."/>
            <person name="Bult C.J."/>
            <person name="Kerlavage A.R."/>
            <person name="Sutton G.G."/>
            <person name="Kelley J.M."/>
            <person name="Fritchman J.L."/>
            <person name="Weidman J.F."/>
            <person name="Small K.V."/>
            <person name="Sandusky M."/>
            <person name="Fuhrmann J.L."/>
            <person name="Nguyen D.T."/>
            <person name="Utterback T.R."/>
            <person name="Saudek D.M."/>
            <person name="Phillips C.A."/>
            <person name="Merrick J.M."/>
            <person name="Tomb J.-F."/>
            <person name="Dougherty B.A."/>
            <person name="Bott K.F."/>
            <person name="Hu P.-C."/>
            <person name="Lucier T.S."/>
            <person name="Peterson S.N."/>
            <person name="Smith H.O."/>
            <person name="Hutchison C.A. III"/>
            <person name="Venter J.C."/>
        </authorList>
    </citation>
    <scope>NUCLEOTIDE SEQUENCE [LARGE SCALE GENOMIC DNA]</scope>
    <source>
        <strain>ATCC 33530 / DSM 19775 / NCTC 10195 / G37</strain>
    </source>
</reference>
<dbReference type="EMBL" id="L43967">
    <property type="protein sequence ID" value="AAC71368.1"/>
    <property type="molecule type" value="Genomic_DNA"/>
</dbReference>
<dbReference type="PIR" id="F64216">
    <property type="entry name" value="F64216"/>
</dbReference>
<dbReference type="RefSeq" id="WP_009885835.1">
    <property type="nucleotide sequence ID" value="NC_000908.2"/>
</dbReference>
<dbReference type="SMR" id="P47396"/>
<dbReference type="FunCoup" id="P47396">
    <property type="interactions" value="220"/>
</dbReference>
<dbReference type="STRING" id="243273.MG_150"/>
<dbReference type="GeneID" id="88282283"/>
<dbReference type="KEGG" id="mge:MG_150"/>
<dbReference type="eggNOG" id="COG0051">
    <property type="taxonomic scope" value="Bacteria"/>
</dbReference>
<dbReference type="HOGENOM" id="CLU_122625_1_3_14"/>
<dbReference type="InParanoid" id="P47396"/>
<dbReference type="OrthoDB" id="9804464at2"/>
<dbReference type="BioCyc" id="MGEN243273:G1GJ2-174-MONOMER"/>
<dbReference type="Proteomes" id="UP000000807">
    <property type="component" value="Chromosome"/>
</dbReference>
<dbReference type="GO" id="GO:0015935">
    <property type="term" value="C:small ribosomal subunit"/>
    <property type="evidence" value="ECO:0000318"/>
    <property type="project" value="GO_Central"/>
</dbReference>
<dbReference type="GO" id="GO:0003735">
    <property type="term" value="F:structural constituent of ribosome"/>
    <property type="evidence" value="ECO:0000318"/>
    <property type="project" value="GO_Central"/>
</dbReference>
<dbReference type="GO" id="GO:0000049">
    <property type="term" value="F:tRNA binding"/>
    <property type="evidence" value="ECO:0007669"/>
    <property type="project" value="UniProtKB-UniRule"/>
</dbReference>
<dbReference type="GO" id="GO:0006412">
    <property type="term" value="P:translation"/>
    <property type="evidence" value="ECO:0007669"/>
    <property type="project" value="UniProtKB-UniRule"/>
</dbReference>
<dbReference type="FunFam" id="3.30.70.600:FF:000003">
    <property type="entry name" value="30S ribosomal protein S10"/>
    <property type="match status" value="1"/>
</dbReference>
<dbReference type="Gene3D" id="3.30.70.600">
    <property type="entry name" value="Ribosomal protein S10 domain"/>
    <property type="match status" value="1"/>
</dbReference>
<dbReference type="HAMAP" id="MF_00508">
    <property type="entry name" value="Ribosomal_uS10"/>
    <property type="match status" value="1"/>
</dbReference>
<dbReference type="InterPro" id="IPR001848">
    <property type="entry name" value="Ribosomal_uS10"/>
</dbReference>
<dbReference type="InterPro" id="IPR018268">
    <property type="entry name" value="Ribosomal_uS10_CS"/>
</dbReference>
<dbReference type="InterPro" id="IPR027486">
    <property type="entry name" value="Ribosomal_uS10_dom"/>
</dbReference>
<dbReference type="InterPro" id="IPR036838">
    <property type="entry name" value="Ribosomal_uS10_dom_sf"/>
</dbReference>
<dbReference type="NCBIfam" id="NF001861">
    <property type="entry name" value="PRK00596.1"/>
    <property type="match status" value="1"/>
</dbReference>
<dbReference type="NCBIfam" id="TIGR01049">
    <property type="entry name" value="rpsJ_bact"/>
    <property type="match status" value="1"/>
</dbReference>
<dbReference type="PANTHER" id="PTHR11700">
    <property type="entry name" value="30S RIBOSOMAL PROTEIN S10 FAMILY MEMBER"/>
    <property type="match status" value="1"/>
</dbReference>
<dbReference type="Pfam" id="PF00338">
    <property type="entry name" value="Ribosomal_S10"/>
    <property type="match status" value="1"/>
</dbReference>
<dbReference type="PRINTS" id="PR00971">
    <property type="entry name" value="RIBOSOMALS10"/>
</dbReference>
<dbReference type="SMART" id="SM01403">
    <property type="entry name" value="Ribosomal_S10"/>
    <property type="match status" value="1"/>
</dbReference>
<dbReference type="SUPFAM" id="SSF54999">
    <property type="entry name" value="Ribosomal protein S10"/>
    <property type="match status" value="1"/>
</dbReference>
<dbReference type="PROSITE" id="PS00361">
    <property type="entry name" value="RIBOSOMAL_S10"/>
    <property type="match status" value="1"/>
</dbReference>
<feature type="chain" id="PRO_0000146552" description="Small ribosomal subunit protein uS10">
    <location>
        <begin position="1"/>
        <end position="106"/>
    </location>
</feature>
<keyword id="KW-1185">Reference proteome</keyword>
<keyword id="KW-0687">Ribonucleoprotein</keyword>
<keyword id="KW-0689">Ribosomal protein</keyword>
<organism>
    <name type="scientific">Mycoplasma genitalium (strain ATCC 33530 / DSM 19775 / NCTC 10195 / G37)</name>
    <name type="common">Mycoplasmoides genitalium</name>
    <dbReference type="NCBI Taxonomy" id="243273"/>
    <lineage>
        <taxon>Bacteria</taxon>
        <taxon>Bacillati</taxon>
        <taxon>Mycoplasmatota</taxon>
        <taxon>Mycoplasmoidales</taxon>
        <taxon>Mycoplasmoidaceae</taxon>
        <taxon>Mycoplasmoides</taxon>
    </lineage>
</organism>
<accession>P47396</accession>